<proteinExistence type="inferred from homology"/>
<gene>
    <name type="primary">ppil3</name>
    <name type="ORF">DDB_G0291734</name>
</gene>
<reference key="1">
    <citation type="journal article" date="2005" name="Nature">
        <title>The genome of the social amoeba Dictyostelium discoideum.</title>
        <authorList>
            <person name="Eichinger L."/>
            <person name="Pachebat J.A."/>
            <person name="Gloeckner G."/>
            <person name="Rajandream M.A."/>
            <person name="Sucgang R."/>
            <person name="Berriman M."/>
            <person name="Song J."/>
            <person name="Olsen R."/>
            <person name="Szafranski K."/>
            <person name="Xu Q."/>
            <person name="Tunggal B."/>
            <person name="Kummerfeld S."/>
            <person name="Madera M."/>
            <person name="Konfortov B.A."/>
            <person name="Rivero F."/>
            <person name="Bankier A.T."/>
            <person name="Lehmann R."/>
            <person name="Hamlin N."/>
            <person name="Davies R."/>
            <person name="Gaudet P."/>
            <person name="Fey P."/>
            <person name="Pilcher K."/>
            <person name="Chen G."/>
            <person name="Saunders D."/>
            <person name="Sodergren E.J."/>
            <person name="Davis P."/>
            <person name="Kerhornou A."/>
            <person name="Nie X."/>
            <person name="Hall N."/>
            <person name="Anjard C."/>
            <person name="Hemphill L."/>
            <person name="Bason N."/>
            <person name="Farbrother P."/>
            <person name="Desany B."/>
            <person name="Just E."/>
            <person name="Morio T."/>
            <person name="Rost R."/>
            <person name="Churcher C.M."/>
            <person name="Cooper J."/>
            <person name="Haydock S."/>
            <person name="van Driessche N."/>
            <person name="Cronin A."/>
            <person name="Goodhead I."/>
            <person name="Muzny D.M."/>
            <person name="Mourier T."/>
            <person name="Pain A."/>
            <person name="Lu M."/>
            <person name="Harper D."/>
            <person name="Lindsay R."/>
            <person name="Hauser H."/>
            <person name="James K.D."/>
            <person name="Quiles M."/>
            <person name="Madan Babu M."/>
            <person name="Saito T."/>
            <person name="Buchrieser C."/>
            <person name="Wardroper A."/>
            <person name="Felder M."/>
            <person name="Thangavelu M."/>
            <person name="Johnson D."/>
            <person name="Knights A."/>
            <person name="Loulseged H."/>
            <person name="Mungall K.L."/>
            <person name="Oliver K."/>
            <person name="Price C."/>
            <person name="Quail M.A."/>
            <person name="Urushihara H."/>
            <person name="Hernandez J."/>
            <person name="Rabbinowitsch E."/>
            <person name="Steffen D."/>
            <person name="Sanders M."/>
            <person name="Ma J."/>
            <person name="Kohara Y."/>
            <person name="Sharp S."/>
            <person name="Simmonds M.N."/>
            <person name="Spiegler S."/>
            <person name="Tivey A."/>
            <person name="Sugano S."/>
            <person name="White B."/>
            <person name="Walker D."/>
            <person name="Woodward J.R."/>
            <person name="Winckler T."/>
            <person name="Tanaka Y."/>
            <person name="Shaulsky G."/>
            <person name="Schleicher M."/>
            <person name="Weinstock G.M."/>
            <person name="Rosenthal A."/>
            <person name="Cox E.C."/>
            <person name="Chisholm R.L."/>
            <person name="Gibbs R.A."/>
            <person name="Loomis W.F."/>
            <person name="Platzer M."/>
            <person name="Kay R.R."/>
            <person name="Williams J.G."/>
            <person name="Dear P.H."/>
            <person name="Noegel A.A."/>
            <person name="Barrell B.G."/>
            <person name="Kuspa A."/>
        </authorList>
    </citation>
    <scope>NUCLEOTIDE SEQUENCE [LARGE SCALE GENOMIC DNA]</scope>
    <source>
        <strain>AX4</strain>
    </source>
</reference>
<keyword id="KW-0413">Isomerase</keyword>
<keyword id="KW-1185">Reference proteome</keyword>
<keyword id="KW-0697">Rotamase</keyword>
<sequence>MSVTLHTSLGDIKVEIFCDSVPLASENFLALCASNYYNNTIFHRNIKGFMIQGGDPTNTGRGGESIWKKQFKDEFPSHLKHNTRGILSMANSGPDTNGSQFFITYGKHRSLNKVYTVFGKIIAGIEVLDLMEKVPVDDKDLPLNEIILKSVTIHANPIANQ</sequence>
<evidence type="ECO:0000250" key="1"/>
<evidence type="ECO:0000255" key="2">
    <source>
        <dbReference type="PROSITE-ProRule" id="PRU00156"/>
    </source>
</evidence>
<evidence type="ECO:0000305" key="3"/>
<organism>
    <name type="scientific">Dictyostelium discoideum</name>
    <name type="common">Social amoeba</name>
    <dbReference type="NCBI Taxonomy" id="44689"/>
    <lineage>
        <taxon>Eukaryota</taxon>
        <taxon>Amoebozoa</taxon>
        <taxon>Evosea</taxon>
        <taxon>Eumycetozoa</taxon>
        <taxon>Dictyostelia</taxon>
        <taxon>Dictyosteliales</taxon>
        <taxon>Dictyosteliaceae</taxon>
        <taxon>Dictyostelium</taxon>
    </lineage>
</organism>
<accession>Q54E95</accession>
<protein>
    <recommendedName>
        <fullName>Peptidyl-prolyl cis-trans isomerase-like 3</fullName>
        <shortName>PPIase</shortName>
        <ecNumber>5.2.1.8</ecNumber>
    </recommendedName>
    <alternativeName>
        <fullName>Rotamase ppil3</fullName>
    </alternativeName>
</protein>
<dbReference type="EC" id="5.2.1.8"/>
<dbReference type="EMBL" id="AAFI02000182">
    <property type="protein sequence ID" value="EAL61563.1"/>
    <property type="molecule type" value="Genomic_DNA"/>
</dbReference>
<dbReference type="RefSeq" id="XP_629967.1">
    <property type="nucleotide sequence ID" value="XM_629965.1"/>
</dbReference>
<dbReference type="SMR" id="Q54E95"/>
<dbReference type="FunCoup" id="Q54E95">
    <property type="interactions" value="307"/>
</dbReference>
<dbReference type="STRING" id="44689.Q54E95"/>
<dbReference type="PaxDb" id="44689-DDB0233550"/>
<dbReference type="EnsemblProtists" id="EAL61563">
    <property type="protein sequence ID" value="EAL61563"/>
    <property type="gene ID" value="DDB_G0291734"/>
</dbReference>
<dbReference type="GeneID" id="8628297"/>
<dbReference type="KEGG" id="ddi:DDB_G0291734"/>
<dbReference type="dictyBase" id="DDB_G0291734">
    <property type="gene designation" value="ppil3"/>
</dbReference>
<dbReference type="VEuPathDB" id="AmoebaDB:DDB_G0291734"/>
<dbReference type="eggNOG" id="KOG0884">
    <property type="taxonomic scope" value="Eukaryota"/>
</dbReference>
<dbReference type="HOGENOM" id="CLU_012062_16_3_1"/>
<dbReference type="InParanoid" id="Q54E95"/>
<dbReference type="OMA" id="VPFHRVM"/>
<dbReference type="PhylomeDB" id="Q54E95"/>
<dbReference type="Reactome" id="R-DDI-72163">
    <property type="pathway name" value="mRNA Splicing - Major Pathway"/>
</dbReference>
<dbReference type="PRO" id="PR:Q54E95"/>
<dbReference type="Proteomes" id="UP000002195">
    <property type="component" value="Chromosome 6"/>
</dbReference>
<dbReference type="GO" id="GO:0071013">
    <property type="term" value="C:catalytic step 2 spliceosome"/>
    <property type="evidence" value="ECO:0000318"/>
    <property type="project" value="GO_Central"/>
</dbReference>
<dbReference type="GO" id="GO:0003755">
    <property type="term" value="F:peptidyl-prolyl cis-trans isomerase activity"/>
    <property type="evidence" value="ECO:0000318"/>
    <property type="project" value="GO_Central"/>
</dbReference>
<dbReference type="GO" id="GO:0006457">
    <property type="term" value="P:protein folding"/>
    <property type="evidence" value="ECO:0000318"/>
    <property type="project" value="GO_Central"/>
</dbReference>
<dbReference type="CDD" id="cd01928">
    <property type="entry name" value="Cyclophilin_PPIL3_like"/>
    <property type="match status" value="1"/>
</dbReference>
<dbReference type="FunFam" id="2.40.100.10:FF:000121">
    <property type="entry name" value="Peptidyl-prolyl cis-trans isomerase-like 3"/>
    <property type="match status" value="1"/>
</dbReference>
<dbReference type="Gene3D" id="2.40.100.10">
    <property type="entry name" value="Cyclophilin-like"/>
    <property type="match status" value="1"/>
</dbReference>
<dbReference type="InterPro" id="IPR029000">
    <property type="entry name" value="Cyclophilin-like_dom_sf"/>
</dbReference>
<dbReference type="InterPro" id="IPR024936">
    <property type="entry name" value="Cyclophilin-type_PPIase"/>
</dbReference>
<dbReference type="InterPro" id="IPR020892">
    <property type="entry name" value="Cyclophilin-type_PPIase_CS"/>
</dbReference>
<dbReference type="InterPro" id="IPR002130">
    <property type="entry name" value="Cyclophilin-type_PPIase_dom"/>
</dbReference>
<dbReference type="InterPro" id="IPR044666">
    <property type="entry name" value="Cyclophilin_A-like"/>
</dbReference>
<dbReference type="PANTHER" id="PTHR45625:SF2">
    <property type="entry name" value="PEPTIDYL-PROLYL CIS-TRANS ISOMERASE-LIKE 3"/>
    <property type="match status" value="1"/>
</dbReference>
<dbReference type="PANTHER" id="PTHR45625">
    <property type="entry name" value="PEPTIDYL-PROLYL CIS-TRANS ISOMERASE-RELATED"/>
    <property type="match status" value="1"/>
</dbReference>
<dbReference type="Pfam" id="PF00160">
    <property type="entry name" value="Pro_isomerase"/>
    <property type="match status" value="1"/>
</dbReference>
<dbReference type="PIRSF" id="PIRSF001467">
    <property type="entry name" value="Peptidylpro_ismrse"/>
    <property type="match status" value="1"/>
</dbReference>
<dbReference type="PRINTS" id="PR00153">
    <property type="entry name" value="CSAPPISMRASE"/>
</dbReference>
<dbReference type="SUPFAM" id="SSF50891">
    <property type="entry name" value="Cyclophilin-like"/>
    <property type="match status" value="1"/>
</dbReference>
<dbReference type="PROSITE" id="PS00170">
    <property type="entry name" value="CSA_PPIASE_1"/>
    <property type="match status" value="1"/>
</dbReference>
<dbReference type="PROSITE" id="PS50072">
    <property type="entry name" value="CSA_PPIASE_2"/>
    <property type="match status" value="1"/>
</dbReference>
<feature type="chain" id="PRO_0000328023" description="Peptidyl-prolyl cis-trans isomerase-like 3">
    <location>
        <begin position="1"/>
        <end position="161"/>
    </location>
</feature>
<feature type="domain" description="PPIase cyclophilin-type" evidence="2">
    <location>
        <begin position="1"/>
        <end position="153"/>
    </location>
</feature>
<name>PPIL3_DICDI</name>
<comment type="function">
    <text evidence="1">PPIases accelerate the folding of proteins. It catalyzes the cis-trans isomerization of proline imidic peptide bonds in oligopeptides (By similarity).</text>
</comment>
<comment type="catalytic activity">
    <reaction>
        <text>[protein]-peptidylproline (omega=180) = [protein]-peptidylproline (omega=0)</text>
        <dbReference type="Rhea" id="RHEA:16237"/>
        <dbReference type="Rhea" id="RHEA-COMP:10747"/>
        <dbReference type="Rhea" id="RHEA-COMP:10748"/>
        <dbReference type="ChEBI" id="CHEBI:83833"/>
        <dbReference type="ChEBI" id="CHEBI:83834"/>
        <dbReference type="EC" id="5.2.1.8"/>
    </reaction>
</comment>
<comment type="similarity">
    <text evidence="3">Belongs to the cyclophilin-type PPIase family. PPIL3 subfamily.</text>
</comment>